<feature type="chain" id="PRO_1000138931" description="Deoxyguanosinetriphosphate triphosphohydrolase-like protein">
    <location>
        <begin position="1"/>
        <end position="446"/>
    </location>
</feature>
<feature type="domain" description="HD" evidence="2">
    <location>
        <begin position="59"/>
        <end position="252"/>
    </location>
</feature>
<feature type="region of interest" description="Disordered" evidence="3">
    <location>
        <begin position="1"/>
        <end position="28"/>
    </location>
</feature>
<feature type="compositionally biased region" description="Basic and acidic residues" evidence="3">
    <location>
        <begin position="7"/>
        <end position="28"/>
    </location>
</feature>
<accession>A0KX58</accession>
<sequence length="446" mass="50705">MSSSVWQERRHGEDKQRRNDHRSPFQRDRARILHSAAFRRLQAKTQVLGVGMNDFYRTRLTHSLEVSQIGTGIAAQLSRKYPEHKPLLGSMSLLESLCLAHDIGHPPFGHGGEVALNYMMRHHGGFEGNGQTFRILSKLEPYTEAFGMNLCRRTMLGILKYPASQSLLFVAGSHPEITNHRQLKPSQWPPVKGIFDDDSDIFDWVLEPLSVADRARFTSVQPSLQPNYPHLRTQFKSFDCSIMELADDIAYAVHDLEDAIVMGIVTASQWQQDVAPTLKHSGDPWIRQELADIGTKLFSHEHHLRKDAIGTLVNGFVTAIIINDDPAFEEPLLRFNASLEPEFANALNVLKQLVFKYVIRKPEIQMLEYKGQQIVMGLFEAFASDPERLLPLNTQERWRTSEQQGQNSHRVLADYISGMTDEFAGRLYQQLFSPKAGSNVELSKEM</sequence>
<proteinExistence type="inferred from homology"/>
<dbReference type="EMBL" id="CP000469">
    <property type="protein sequence ID" value="ABK48377.1"/>
    <property type="molecule type" value="Genomic_DNA"/>
</dbReference>
<dbReference type="RefSeq" id="WP_011717103.1">
    <property type="nucleotide sequence ID" value="NC_008577.1"/>
</dbReference>
<dbReference type="SMR" id="A0KX58"/>
<dbReference type="STRING" id="94122.Shewana3_2147"/>
<dbReference type="KEGG" id="shn:Shewana3_2147"/>
<dbReference type="eggNOG" id="COG0232">
    <property type="taxonomic scope" value="Bacteria"/>
</dbReference>
<dbReference type="HOGENOM" id="CLU_028163_0_0_6"/>
<dbReference type="OrthoDB" id="9803619at2"/>
<dbReference type="Proteomes" id="UP000002589">
    <property type="component" value="Chromosome"/>
</dbReference>
<dbReference type="GO" id="GO:0008832">
    <property type="term" value="F:dGTPase activity"/>
    <property type="evidence" value="ECO:0007669"/>
    <property type="project" value="TreeGrafter"/>
</dbReference>
<dbReference type="GO" id="GO:0006203">
    <property type="term" value="P:dGTP catabolic process"/>
    <property type="evidence" value="ECO:0007669"/>
    <property type="project" value="TreeGrafter"/>
</dbReference>
<dbReference type="CDD" id="cd00077">
    <property type="entry name" value="HDc"/>
    <property type="match status" value="1"/>
</dbReference>
<dbReference type="FunFam" id="1.10.3210.10:FF:000063">
    <property type="entry name" value="Deoxyguanosinetriphosphate triphosphohydrolase-like protein"/>
    <property type="match status" value="1"/>
</dbReference>
<dbReference type="Gene3D" id="1.10.3210.10">
    <property type="entry name" value="Hypothetical protein af1432"/>
    <property type="match status" value="2"/>
</dbReference>
<dbReference type="HAMAP" id="MF_01212">
    <property type="entry name" value="dGTPase_type2"/>
    <property type="match status" value="1"/>
</dbReference>
<dbReference type="InterPro" id="IPR006261">
    <property type="entry name" value="dGTPase"/>
</dbReference>
<dbReference type="InterPro" id="IPR050135">
    <property type="entry name" value="dGTPase-like"/>
</dbReference>
<dbReference type="InterPro" id="IPR023023">
    <property type="entry name" value="dNTPase_2"/>
</dbReference>
<dbReference type="InterPro" id="IPR003607">
    <property type="entry name" value="HD/PDEase_dom"/>
</dbReference>
<dbReference type="InterPro" id="IPR006674">
    <property type="entry name" value="HD_domain"/>
</dbReference>
<dbReference type="InterPro" id="IPR026875">
    <property type="entry name" value="PHydrolase_assoc_dom"/>
</dbReference>
<dbReference type="NCBIfam" id="NF041026">
    <property type="entry name" value="antiphage_dGTPase"/>
    <property type="match status" value="1"/>
</dbReference>
<dbReference type="NCBIfam" id="TIGR01353">
    <property type="entry name" value="dGTP_triPase"/>
    <property type="match status" value="1"/>
</dbReference>
<dbReference type="NCBIfam" id="NF003701">
    <property type="entry name" value="PRK05318.1"/>
    <property type="match status" value="1"/>
</dbReference>
<dbReference type="PANTHER" id="PTHR11373:SF40">
    <property type="entry name" value="DEOXYGUANOSINETRIPHOSPHATE TRIPHOSPHOHYDROLASE-LIKE PROTEIN 2"/>
    <property type="match status" value="1"/>
</dbReference>
<dbReference type="PANTHER" id="PTHR11373">
    <property type="entry name" value="DEOXYNUCLEOSIDE TRIPHOSPHATE TRIPHOSPHOHYDROLASE"/>
    <property type="match status" value="1"/>
</dbReference>
<dbReference type="Pfam" id="PF01966">
    <property type="entry name" value="HD"/>
    <property type="match status" value="1"/>
</dbReference>
<dbReference type="Pfam" id="PF13286">
    <property type="entry name" value="HD_assoc"/>
    <property type="match status" value="1"/>
</dbReference>
<dbReference type="SMART" id="SM00471">
    <property type="entry name" value="HDc"/>
    <property type="match status" value="1"/>
</dbReference>
<dbReference type="SUPFAM" id="SSF109604">
    <property type="entry name" value="HD-domain/PDEase-like"/>
    <property type="match status" value="1"/>
</dbReference>
<dbReference type="PROSITE" id="PS51831">
    <property type="entry name" value="HD"/>
    <property type="match status" value="1"/>
</dbReference>
<gene>
    <name type="ordered locus">Shewana3_2147</name>
</gene>
<reference key="1">
    <citation type="submission" date="2006-09" db="EMBL/GenBank/DDBJ databases">
        <title>Complete sequence of chromosome 1 of Shewanella sp. ANA-3.</title>
        <authorList>
            <person name="Copeland A."/>
            <person name="Lucas S."/>
            <person name="Lapidus A."/>
            <person name="Barry K."/>
            <person name="Detter J.C."/>
            <person name="Glavina del Rio T."/>
            <person name="Hammon N."/>
            <person name="Israni S."/>
            <person name="Dalin E."/>
            <person name="Tice H."/>
            <person name="Pitluck S."/>
            <person name="Chertkov O."/>
            <person name="Brettin T."/>
            <person name="Bruce D."/>
            <person name="Han C."/>
            <person name="Tapia R."/>
            <person name="Gilna P."/>
            <person name="Schmutz J."/>
            <person name="Larimer F."/>
            <person name="Land M."/>
            <person name="Hauser L."/>
            <person name="Kyrpides N."/>
            <person name="Kim E."/>
            <person name="Newman D."/>
            <person name="Salticov C."/>
            <person name="Konstantinidis K."/>
            <person name="Klappenback J."/>
            <person name="Tiedje J."/>
            <person name="Richardson P."/>
        </authorList>
    </citation>
    <scope>NUCLEOTIDE SEQUENCE [LARGE SCALE GENOMIC DNA]</scope>
    <source>
        <strain>ANA-3</strain>
    </source>
</reference>
<evidence type="ECO:0000255" key="1">
    <source>
        <dbReference type="HAMAP-Rule" id="MF_01212"/>
    </source>
</evidence>
<evidence type="ECO:0000255" key="2">
    <source>
        <dbReference type="PROSITE-ProRule" id="PRU01175"/>
    </source>
</evidence>
<evidence type="ECO:0000256" key="3">
    <source>
        <dbReference type="SAM" id="MobiDB-lite"/>
    </source>
</evidence>
<comment type="similarity">
    <text evidence="1">Belongs to the dGTPase family. Type 2 subfamily.</text>
</comment>
<organism>
    <name type="scientific">Shewanella sp. (strain ANA-3)</name>
    <dbReference type="NCBI Taxonomy" id="94122"/>
    <lineage>
        <taxon>Bacteria</taxon>
        <taxon>Pseudomonadati</taxon>
        <taxon>Pseudomonadota</taxon>
        <taxon>Gammaproteobacteria</taxon>
        <taxon>Alteromonadales</taxon>
        <taxon>Shewanellaceae</taxon>
        <taxon>Shewanella</taxon>
    </lineage>
</organism>
<protein>
    <recommendedName>
        <fullName evidence="1">Deoxyguanosinetriphosphate triphosphohydrolase-like protein</fullName>
    </recommendedName>
</protein>
<name>DGTL1_SHESA</name>
<keyword id="KW-0378">Hydrolase</keyword>